<comment type="catalytic activity">
    <reaction evidence="1">
        <text>(6R)-10-formyltetrahydrofolate + 5-amino-1-(5-phospho-beta-D-ribosyl)imidazole-4-carboxamide = 5-formamido-1-(5-phospho-D-ribosyl)imidazole-4-carboxamide + (6S)-5,6,7,8-tetrahydrofolate</text>
        <dbReference type="Rhea" id="RHEA:22192"/>
        <dbReference type="ChEBI" id="CHEBI:57453"/>
        <dbReference type="ChEBI" id="CHEBI:58467"/>
        <dbReference type="ChEBI" id="CHEBI:58475"/>
        <dbReference type="ChEBI" id="CHEBI:195366"/>
        <dbReference type="EC" id="2.1.2.3"/>
    </reaction>
</comment>
<comment type="catalytic activity">
    <reaction evidence="1">
        <text>IMP + H2O = 5-formamido-1-(5-phospho-D-ribosyl)imidazole-4-carboxamide</text>
        <dbReference type="Rhea" id="RHEA:18445"/>
        <dbReference type="ChEBI" id="CHEBI:15377"/>
        <dbReference type="ChEBI" id="CHEBI:58053"/>
        <dbReference type="ChEBI" id="CHEBI:58467"/>
        <dbReference type="EC" id="3.5.4.10"/>
    </reaction>
</comment>
<comment type="pathway">
    <text evidence="1">Purine metabolism; IMP biosynthesis via de novo pathway; 5-formamido-1-(5-phospho-D-ribosyl)imidazole-4-carboxamide from 5-amino-1-(5-phospho-D-ribosyl)imidazole-4-carboxamide (10-formyl THF route): step 1/1.</text>
</comment>
<comment type="pathway">
    <text evidence="1">Purine metabolism; IMP biosynthesis via de novo pathway; IMP from 5-formamido-1-(5-phospho-D-ribosyl)imidazole-4-carboxamide: step 1/1.</text>
</comment>
<comment type="domain">
    <text evidence="1">The IMP cyclohydrolase activity resides in the N-terminal region.</text>
</comment>
<comment type="similarity">
    <text evidence="1">Belongs to the PurH family.</text>
</comment>
<feature type="chain" id="PRO_0000192118" description="Bifunctional purine biosynthesis protein PurH">
    <location>
        <begin position="1"/>
        <end position="523"/>
    </location>
</feature>
<feature type="domain" description="MGS-like" evidence="2">
    <location>
        <begin position="1"/>
        <end position="150"/>
    </location>
</feature>
<name>PUR9_RHOBA</name>
<accession>Q7UKJ8</accession>
<proteinExistence type="inferred from homology"/>
<evidence type="ECO:0000255" key="1">
    <source>
        <dbReference type="HAMAP-Rule" id="MF_00139"/>
    </source>
</evidence>
<evidence type="ECO:0000255" key="2">
    <source>
        <dbReference type="PROSITE-ProRule" id="PRU01202"/>
    </source>
</evidence>
<dbReference type="EC" id="2.1.2.3" evidence="1"/>
<dbReference type="EC" id="3.5.4.10" evidence="1"/>
<dbReference type="EMBL" id="BX294150">
    <property type="protein sequence ID" value="CAD76635.1"/>
    <property type="molecule type" value="Genomic_DNA"/>
</dbReference>
<dbReference type="RefSeq" id="NP_869249.1">
    <property type="nucleotide sequence ID" value="NC_005027.1"/>
</dbReference>
<dbReference type="RefSeq" id="WP_011122619.1">
    <property type="nucleotide sequence ID" value="NC_005027.1"/>
</dbReference>
<dbReference type="SMR" id="Q7UKJ8"/>
<dbReference type="FunCoup" id="Q7UKJ8">
    <property type="interactions" value="512"/>
</dbReference>
<dbReference type="STRING" id="243090.RB10113"/>
<dbReference type="EnsemblBacteria" id="CAD76635">
    <property type="protein sequence ID" value="CAD76635"/>
    <property type="gene ID" value="RB10113"/>
</dbReference>
<dbReference type="KEGG" id="rba:RB10113"/>
<dbReference type="PATRIC" id="fig|243090.15.peg.4877"/>
<dbReference type="eggNOG" id="COG0138">
    <property type="taxonomic scope" value="Bacteria"/>
</dbReference>
<dbReference type="HOGENOM" id="CLU_016316_5_2_0"/>
<dbReference type="InParanoid" id="Q7UKJ8"/>
<dbReference type="OrthoDB" id="9802065at2"/>
<dbReference type="UniPathway" id="UPA00074">
    <property type="reaction ID" value="UER00133"/>
</dbReference>
<dbReference type="UniPathway" id="UPA00074">
    <property type="reaction ID" value="UER00135"/>
</dbReference>
<dbReference type="Proteomes" id="UP000001025">
    <property type="component" value="Chromosome"/>
</dbReference>
<dbReference type="GO" id="GO:0005829">
    <property type="term" value="C:cytosol"/>
    <property type="evidence" value="ECO:0000318"/>
    <property type="project" value="GO_Central"/>
</dbReference>
<dbReference type="GO" id="GO:0003937">
    <property type="term" value="F:IMP cyclohydrolase activity"/>
    <property type="evidence" value="ECO:0000318"/>
    <property type="project" value="GO_Central"/>
</dbReference>
<dbReference type="GO" id="GO:0004643">
    <property type="term" value="F:phosphoribosylaminoimidazolecarboxamide formyltransferase activity"/>
    <property type="evidence" value="ECO:0000318"/>
    <property type="project" value="GO_Central"/>
</dbReference>
<dbReference type="GO" id="GO:0006189">
    <property type="term" value="P:'de novo' IMP biosynthetic process"/>
    <property type="evidence" value="ECO:0000318"/>
    <property type="project" value="GO_Central"/>
</dbReference>
<dbReference type="CDD" id="cd01421">
    <property type="entry name" value="IMPCH"/>
    <property type="match status" value="1"/>
</dbReference>
<dbReference type="FunFam" id="3.40.140.20:FF:000001">
    <property type="entry name" value="Bifunctional purine biosynthesis protein PurH"/>
    <property type="match status" value="1"/>
</dbReference>
<dbReference type="FunFam" id="3.40.140.20:FF:000005">
    <property type="entry name" value="Bifunctional purine biosynthesis protein PurH"/>
    <property type="match status" value="1"/>
</dbReference>
<dbReference type="FunFam" id="3.40.50.1380:FF:000001">
    <property type="entry name" value="Bifunctional purine biosynthesis protein PurH"/>
    <property type="match status" value="1"/>
</dbReference>
<dbReference type="Gene3D" id="3.40.140.20">
    <property type="match status" value="2"/>
</dbReference>
<dbReference type="Gene3D" id="3.40.50.1380">
    <property type="entry name" value="Methylglyoxal synthase-like domain"/>
    <property type="match status" value="1"/>
</dbReference>
<dbReference type="HAMAP" id="MF_00139">
    <property type="entry name" value="PurH"/>
    <property type="match status" value="1"/>
</dbReference>
<dbReference type="InterPro" id="IPR024051">
    <property type="entry name" value="AICAR_Tfase_dup_dom_sf"/>
</dbReference>
<dbReference type="InterPro" id="IPR016193">
    <property type="entry name" value="Cytidine_deaminase-like"/>
</dbReference>
<dbReference type="InterPro" id="IPR011607">
    <property type="entry name" value="MGS-like_dom"/>
</dbReference>
<dbReference type="InterPro" id="IPR036914">
    <property type="entry name" value="MGS-like_dom_sf"/>
</dbReference>
<dbReference type="InterPro" id="IPR002695">
    <property type="entry name" value="PurH-like"/>
</dbReference>
<dbReference type="NCBIfam" id="NF002049">
    <property type="entry name" value="PRK00881.1"/>
    <property type="match status" value="1"/>
</dbReference>
<dbReference type="NCBIfam" id="TIGR00355">
    <property type="entry name" value="purH"/>
    <property type="match status" value="1"/>
</dbReference>
<dbReference type="PANTHER" id="PTHR11692:SF0">
    <property type="entry name" value="BIFUNCTIONAL PURINE BIOSYNTHESIS PROTEIN ATIC"/>
    <property type="match status" value="1"/>
</dbReference>
<dbReference type="PANTHER" id="PTHR11692">
    <property type="entry name" value="BIFUNCTIONAL PURINE BIOSYNTHESIS PROTEIN PURH"/>
    <property type="match status" value="1"/>
</dbReference>
<dbReference type="Pfam" id="PF01808">
    <property type="entry name" value="AICARFT_IMPCHas"/>
    <property type="match status" value="1"/>
</dbReference>
<dbReference type="Pfam" id="PF02142">
    <property type="entry name" value="MGS"/>
    <property type="match status" value="1"/>
</dbReference>
<dbReference type="PIRSF" id="PIRSF000414">
    <property type="entry name" value="AICARFT_IMPCHas"/>
    <property type="match status" value="1"/>
</dbReference>
<dbReference type="SMART" id="SM00798">
    <property type="entry name" value="AICARFT_IMPCHas"/>
    <property type="match status" value="1"/>
</dbReference>
<dbReference type="SMART" id="SM00851">
    <property type="entry name" value="MGS"/>
    <property type="match status" value="1"/>
</dbReference>
<dbReference type="SUPFAM" id="SSF53927">
    <property type="entry name" value="Cytidine deaminase-like"/>
    <property type="match status" value="1"/>
</dbReference>
<dbReference type="SUPFAM" id="SSF52335">
    <property type="entry name" value="Methylglyoxal synthase-like"/>
    <property type="match status" value="1"/>
</dbReference>
<dbReference type="PROSITE" id="PS51855">
    <property type="entry name" value="MGS"/>
    <property type="match status" value="1"/>
</dbReference>
<keyword id="KW-0378">Hydrolase</keyword>
<keyword id="KW-0511">Multifunctional enzyme</keyword>
<keyword id="KW-0658">Purine biosynthesis</keyword>
<keyword id="KW-1185">Reference proteome</keyword>
<keyword id="KW-0808">Transferase</keyword>
<sequence length="523" mass="56202">MSDVVPVRNALISVSDKMGLADFAAGLSAAGVTIYSTGGTRAHLEQSGIKVEDVAEYTGFPEMLDGRVKTLHPRIFAGILARRDLDDHMDTIADHDIEPFDLVVVNLYPFAATVSRSGATRAECIEQIDIGGPSLVRAAAKNHGDVAIATSPEQYGDVLDQLETLGGTTDELRTQLAAEAFDHTAGYDRAIADYMQGDAVGGEFPASMHVSLRRKTQLRYGENPHQRAALYSDSSDRSANLVSARQISGKELSYNNLLDLDAALDIARGFAEPAVSVIKHNNPCGAATGDTLSEAVDKAMAGDPLSAFGSVIGMNRTLDEATAEFLCQPGLFIEAIVAPDFEAGAVGLLTTKPRWKDNVRLMQVGRLDEPARKVSRRFISGGMLVQDADRMVSSPLQWNTVTETPVDDDLWDDISFGWEMVRHVKSNAIVLAKDTSLIGVGAGQMSRVDSVEISIKKAAERSEGSILASDAFFPFPDSIEAAAKAGVLAIIQPGGSRRDDEVIAACDEHEIAMVFTGRRHFKH</sequence>
<protein>
    <recommendedName>
        <fullName evidence="1">Bifunctional purine biosynthesis protein PurH</fullName>
    </recommendedName>
    <domain>
        <recommendedName>
            <fullName evidence="1">Phosphoribosylaminoimidazolecarboxamide formyltransferase</fullName>
            <ecNumber evidence="1">2.1.2.3</ecNumber>
        </recommendedName>
        <alternativeName>
            <fullName evidence="1">AICAR transformylase</fullName>
        </alternativeName>
    </domain>
    <domain>
        <recommendedName>
            <fullName evidence="1">IMP cyclohydrolase</fullName>
            <ecNumber evidence="1">3.5.4.10</ecNumber>
        </recommendedName>
        <alternativeName>
            <fullName evidence="1">ATIC</fullName>
        </alternativeName>
        <alternativeName>
            <fullName evidence="1">IMP synthase</fullName>
        </alternativeName>
        <alternativeName>
            <fullName evidence="1">Inosinicase</fullName>
        </alternativeName>
    </domain>
</protein>
<organism>
    <name type="scientific">Rhodopirellula baltica (strain DSM 10527 / NCIMB 13988 / SH1)</name>
    <dbReference type="NCBI Taxonomy" id="243090"/>
    <lineage>
        <taxon>Bacteria</taxon>
        <taxon>Pseudomonadati</taxon>
        <taxon>Planctomycetota</taxon>
        <taxon>Planctomycetia</taxon>
        <taxon>Pirellulales</taxon>
        <taxon>Pirellulaceae</taxon>
        <taxon>Rhodopirellula</taxon>
    </lineage>
</organism>
<gene>
    <name evidence="1" type="primary">purH</name>
    <name type="ordered locus">RB10113</name>
</gene>
<reference key="1">
    <citation type="journal article" date="2003" name="Proc. Natl. Acad. Sci. U.S.A.">
        <title>Complete genome sequence of the marine planctomycete Pirellula sp. strain 1.</title>
        <authorList>
            <person name="Gloeckner F.O."/>
            <person name="Kube M."/>
            <person name="Bauer M."/>
            <person name="Teeling H."/>
            <person name="Lombardot T."/>
            <person name="Ludwig W."/>
            <person name="Gade D."/>
            <person name="Beck A."/>
            <person name="Borzym K."/>
            <person name="Heitmann K."/>
            <person name="Rabus R."/>
            <person name="Schlesner H."/>
            <person name="Amann R."/>
            <person name="Reinhardt R."/>
        </authorList>
    </citation>
    <scope>NUCLEOTIDE SEQUENCE [LARGE SCALE GENOMIC DNA]</scope>
    <source>
        <strain>DSM 10527 / NCIMB 13988 / SH1</strain>
    </source>
</reference>